<accession>Q47BR3</accession>
<organism>
    <name type="scientific">Dechloromonas aromatica (strain RCB)</name>
    <dbReference type="NCBI Taxonomy" id="159087"/>
    <lineage>
        <taxon>Bacteria</taxon>
        <taxon>Pseudomonadati</taxon>
        <taxon>Pseudomonadota</taxon>
        <taxon>Betaproteobacteria</taxon>
        <taxon>Rhodocyclales</taxon>
        <taxon>Azonexaceae</taxon>
        <taxon>Dechloromonas</taxon>
    </lineage>
</organism>
<keyword id="KW-0004">4Fe-4S</keyword>
<keyword id="KW-0963">Cytoplasm</keyword>
<keyword id="KW-1015">Disulfide bond</keyword>
<keyword id="KW-0408">Iron</keyword>
<keyword id="KW-0411">Iron-sulfur</keyword>
<keyword id="KW-0479">Metal-binding</keyword>
<keyword id="KW-0489">Methyltransferase</keyword>
<keyword id="KW-0698">rRNA processing</keyword>
<keyword id="KW-0949">S-adenosyl-L-methionine</keyword>
<keyword id="KW-0808">Transferase</keyword>
<keyword id="KW-0819">tRNA processing</keyword>
<feature type="chain" id="PRO_0000350145" description="Dual-specificity RNA methyltransferase RlmN">
    <location>
        <begin position="1"/>
        <end position="364"/>
    </location>
</feature>
<feature type="domain" description="Radical SAM core" evidence="2">
    <location>
        <begin position="97"/>
        <end position="333"/>
    </location>
</feature>
<feature type="active site" description="Proton acceptor" evidence="1">
    <location>
        <position position="91"/>
    </location>
</feature>
<feature type="active site" description="S-methylcysteine intermediate" evidence="1">
    <location>
        <position position="338"/>
    </location>
</feature>
<feature type="binding site" evidence="1">
    <location>
        <position position="111"/>
    </location>
    <ligand>
        <name>[4Fe-4S] cluster</name>
        <dbReference type="ChEBI" id="CHEBI:49883"/>
        <note>4Fe-4S-S-AdoMet</note>
    </ligand>
</feature>
<feature type="binding site" evidence="1">
    <location>
        <position position="115"/>
    </location>
    <ligand>
        <name>[4Fe-4S] cluster</name>
        <dbReference type="ChEBI" id="CHEBI:49883"/>
        <note>4Fe-4S-S-AdoMet</note>
    </ligand>
</feature>
<feature type="binding site" evidence="1">
    <location>
        <position position="118"/>
    </location>
    <ligand>
        <name>[4Fe-4S] cluster</name>
        <dbReference type="ChEBI" id="CHEBI:49883"/>
        <note>4Fe-4S-S-AdoMet</note>
    </ligand>
</feature>
<feature type="binding site" evidence="1">
    <location>
        <begin position="164"/>
        <end position="165"/>
    </location>
    <ligand>
        <name>S-adenosyl-L-methionine</name>
        <dbReference type="ChEBI" id="CHEBI:59789"/>
    </ligand>
</feature>
<feature type="binding site" evidence="1">
    <location>
        <position position="196"/>
    </location>
    <ligand>
        <name>S-adenosyl-L-methionine</name>
        <dbReference type="ChEBI" id="CHEBI:59789"/>
    </ligand>
</feature>
<feature type="binding site" evidence="1">
    <location>
        <begin position="218"/>
        <end position="220"/>
    </location>
    <ligand>
        <name>S-adenosyl-L-methionine</name>
        <dbReference type="ChEBI" id="CHEBI:59789"/>
    </ligand>
</feature>
<feature type="binding site" evidence="1">
    <location>
        <position position="295"/>
    </location>
    <ligand>
        <name>S-adenosyl-L-methionine</name>
        <dbReference type="ChEBI" id="CHEBI:59789"/>
    </ligand>
</feature>
<feature type="disulfide bond" description="(transient)" evidence="1">
    <location>
        <begin position="104"/>
        <end position="338"/>
    </location>
</feature>
<proteinExistence type="inferred from homology"/>
<name>RLMN_DECAR</name>
<dbReference type="EC" id="2.1.1.192" evidence="1"/>
<dbReference type="EMBL" id="CP000089">
    <property type="protein sequence ID" value="AAZ47718.1"/>
    <property type="molecule type" value="Genomic_DNA"/>
</dbReference>
<dbReference type="SMR" id="Q47BR3"/>
<dbReference type="STRING" id="159087.Daro_2988"/>
<dbReference type="KEGG" id="dar:Daro_2988"/>
<dbReference type="eggNOG" id="COG0820">
    <property type="taxonomic scope" value="Bacteria"/>
</dbReference>
<dbReference type="HOGENOM" id="CLU_029101_0_0_4"/>
<dbReference type="OrthoDB" id="9793973at2"/>
<dbReference type="GO" id="GO:0005737">
    <property type="term" value="C:cytoplasm"/>
    <property type="evidence" value="ECO:0007669"/>
    <property type="project" value="UniProtKB-SubCell"/>
</dbReference>
<dbReference type="GO" id="GO:0051539">
    <property type="term" value="F:4 iron, 4 sulfur cluster binding"/>
    <property type="evidence" value="ECO:0007669"/>
    <property type="project" value="UniProtKB-UniRule"/>
</dbReference>
<dbReference type="GO" id="GO:0046872">
    <property type="term" value="F:metal ion binding"/>
    <property type="evidence" value="ECO:0007669"/>
    <property type="project" value="UniProtKB-KW"/>
</dbReference>
<dbReference type="GO" id="GO:0070040">
    <property type="term" value="F:rRNA (adenine(2503)-C2-)-methyltransferase activity"/>
    <property type="evidence" value="ECO:0007669"/>
    <property type="project" value="UniProtKB-UniRule"/>
</dbReference>
<dbReference type="GO" id="GO:0019843">
    <property type="term" value="F:rRNA binding"/>
    <property type="evidence" value="ECO:0007669"/>
    <property type="project" value="UniProtKB-UniRule"/>
</dbReference>
<dbReference type="GO" id="GO:0002935">
    <property type="term" value="F:tRNA (adenine(37)-C2)-methyltransferase activity"/>
    <property type="evidence" value="ECO:0007669"/>
    <property type="project" value="UniProtKB-UniRule"/>
</dbReference>
<dbReference type="GO" id="GO:0000049">
    <property type="term" value="F:tRNA binding"/>
    <property type="evidence" value="ECO:0007669"/>
    <property type="project" value="UniProtKB-UniRule"/>
</dbReference>
<dbReference type="GO" id="GO:0070475">
    <property type="term" value="P:rRNA base methylation"/>
    <property type="evidence" value="ECO:0007669"/>
    <property type="project" value="UniProtKB-UniRule"/>
</dbReference>
<dbReference type="GO" id="GO:0030488">
    <property type="term" value="P:tRNA methylation"/>
    <property type="evidence" value="ECO:0007669"/>
    <property type="project" value="UniProtKB-UniRule"/>
</dbReference>
<dbReference type="CDD" id="cd01335">
    <property type="entry name" value="Radical_SAM"/>
    <property type="match status" value="1"/>
</dbReference>
<dbReference type="FunFam" id="1.10.150.530:FF:000003">
    <property type="entry name" value="Dual-specificity RNA methyltransferase RlmN"/>
    <property type="match status" value="1"/>
</dbReference>
<dbReference type="FunFam" id="3.20.20.70:FF:000008">
    <property type="entry name" value="Dual-specificity RNA methyltransferase RlmN"/>
    <property type="match status" value="1"/>
</dbReference>
<dbReference type="Gene3D" id="1.10.150.530">
    <property type="match status" value="1"/>
</dbReference>
<dbReference type="Gene3D" id="3.20.20.70">
    <property type="entry name" value="Aldolase class I"/>
    <property type="match status" value="1"/>
</dbReference>
<dbReference type="HAMAP" id="MF_01849">
    <property type="entry name" value="RNA_methyltr_RlmN"/>
    <property type="match status" value="1"/>
</dbReference>
<dbReference type="InterPro" id="IPR013785">
    <property type="entry name" value="Aldolase_TIM"/>
</dbReference>
<dbReference type="InterPro" id="IPR006638">
    <property type="entry name" value="Elp3/MiaA/NifB-like_rSAM"/>
</dbReference>
<dbReference type="InterPro" id="IPR040072">
    <property type="entry name" value="Methyltransferase_A"/>
</dbReference>
<dbReference type="InterPro" id="IPR048641">
    <property type="entry name" value="RlmN_N"/>
</dbReference>
<dbReference type="InterPro" id="IPR027492">
    <property type="entry name" value="RNA_MTrfase_RlmN"/>
</dbReference>
<dbReference type="InterPro" id="IPR004383">
    <property type="entry name" value="rRNA_lsu_MTrfase_RlmN/Cfr"/>
</dbReference>
<dbReference type="InterPro" id="IPR007197">
    <property type="entry name" value="rSAM"/>
</dbReference>
<dbReference type="NCBIfam" id="TIGR00048">
    <property type="entry name" value="rRNA_mod_RlmN"/>
    <property type="match status" value="1"/>
</dbReference>
<dbReference type="PANTHER" id="PTHR30544">
    <property type="entry name" value="23S RRNA METHYLTRANSFERASE"/>
    <property type="match status" value="1"/>
</dbReference>
<dbReference type="PANTHER" id="PTHR30544:SF5">
    <property type="entry name" value="RADICAL SAM CORE DOMAIN-CONTAINING PROTEIN"/>
    <property type="match status" value="1"/>
</dbReference>
<dbReference type="Pfam" id="PF04055">
    <property type="entry name" value="Radical_SAM"/>
    <property type="match status" value="1"/>
</dbReference>
<dbReference type="Pfam" id="PF21016">
    <property type="entry name" value="RlmN_N"/>
    <property type="match status" value="1"/>
</dbReference>
<dbReference type="PIRSF" id="PIRSF006004">
    <property type="entry name" value="CHP00048"/>
    <property type="match status" value="1"/>
</dbReference>
<dbReference type="SFLD" id="SFLDF00275">
    <property type="entry name" value="adenosine_C2_methyltransferase"/>
    <property type="match status" value="1"/>
</dbReference>
<dbReference type="SFLD" id="SFLDS00029">
    <property type="entry name" value="Radical_SAM"/>
    <property type="match status" value="1"/>
</dbReference>
<dbReference type="SMART" id="SM00729">
    <property type="entry name" value="Elp3"/>
    <property type="match status" value="1"/>
</dbReference>
<dbReference type="SUPFAM" id="SSF102114">
    <property type="entry name" value="Radical SAM enzymes"/>
    <property type="match status" value="1"/>
</dbReference>
<dbReference type="PROSITE" id="PS51918">
    <property type="entry name" value="RADICAL_SAM"/>
    <property type="match status" value="1"/>
</dbReference>
<sequence>MTVNLLDFDGESLTAWFAEQGEKPFRAKQVLRWIHRSGVADFDAMTDIAKSLREKLKAKAVVAPPAVVSDKLSDDGTRKFLIDVGNGNAVETVFIPEDDRGTLCISTQAGCALDCAFCSTGKQGFNRNLSVAEIIGQLWQANHALGAVHGDERVISNVVLMGMGEPLANFENSVAALKLMLDDNAYGLSRRRITVSTSGLVPVMDRLGDECPVALAVSLHAPNDKLRDQLVPINQKYPLKELMAACQRYLEKAPRDFITFEYIMLDGINDTDAHARELLALVKSVHCKFNLIPFNPFPGSPFRRSPAERVRHFADILMQAGIVTTTRKTRGDDIDAACGQLAGQVQDKTKRTTGRVIPLKEARS</sequence>
<evidence type="ECO:0000255" key="1">
    <source>
        <dbReference type="HAMAP-Rule" id="MF_01849"/>
    </source>
</evidence>
<evidence type="ECO:0000255" key="2">
    <source>
        <dbReference type="PROSITE-ProRule" id="PRU01266"/>
    </source>
</evidence>
<reference key="1">
    <citation type="journal article" date="2009" name="BMC Genomics">
        <title>Metabolic analysis of the soil microbe Dechloromonas aromatica str. RCB: indications of a surprisingly complex life-style and cryptic anaerobic pathways for aromatic degradation.</title>
        <authorList>
            <person name="Salinero K.K."/>
            <person name="Keller K."/>
            <person name="Feil W.S."/>
            <person name="Feil H."/>
            <person name="Trong S."/>
            <person name="Di Bartolo G."/>
            <person name="Lapidus A."/>
        </authorList>
    </citation>
    <scope>NUCLEOTIDE SEQUENCE [LARGE SCALE GENOMIC DNA]</scope>
    <source>
        <strain>RCB</strain>
    </source>
</reference>
<comment type="function">
    <text evidence="1">Specifically methylates position 2 of adenine 2503 in 23S rRNA and position 2 of adenine 37 in tRNAs. m2A2503 modification seems to play a crucial role in the proofreading step occurring at the peptidyl transferase center and thus would serve to optimize ribosomal fidelity.</text>
</comment>
<comment type="catalytic activity">
    <reaction evidence="1">
        <text>adenosine(2503) in 23S rRNA + 2 reduced [2Fe-2S]-[ferredoxin] + 2 S-adenosyl-L-methionine = 2-methyladenosine(2503) in 23S rRNA + 5'-deoxyadenosine + L-methionine + 2 oxidized [2Fe-2S]-[ferredoxin] + S-adenosyl-L-homocysteine</text>
        <dbReference type="Rhea" id="RHEA:42916"/>
        <dbReference type="Rhea" id="RHEA-COMP:10000"/>
        <dbReference type="Rhea" id="RHEA-COMP:10001"/>
        <dbReference type="Rhea" id="RHEA-COMP:10152"/>
        <dbReference type="Rhea" id="RHEA-COMP:10282"/>
        <dbReference type="ChEBI" id="CHEBI:17319"/>
        <dbReference type="ChEBI" id="CHEBI:33737"/>
        <dbReference type="ChEBI" id="CHEBI:33738"/>
        <dbReference type="ChEBI" id="CHEBI:57844"/>
        <dbReference type="ChEBI" id="CHEBI:57856"/>
        <dbReference type="ChEBI" id="CHEBI:59789"/>
        <dbReference type="ChEBI" id="CHEBI:74411"/>
        <dbReference type="ChEBI" id="CHEBI:74497"/>
        <dbReference type="EC" id="2.1.1.192"/>
    </reaction>
</comment>
<comment type="catalytic activity">
    <reaction evidence="1">
        <text>adenosine(37) in tRNA + 2 reduced [2Fe-2S]-[ferredoxin] + 2 S-adenosyl-L-methionine = 2-methyladenosine(37) in tRNA + 5'-deoxyadenosine + L-methionine + 2 oxidized [2Fe-2S]-[ferredoxin] + S-adenosyl-L-homocysteine</text>
        <dbReference type="Rhea" id="RHEA:43332"/>
        <dbReference type="Rhea" id="RHEA-COMP:10000"/>
        <dbReference type="Rhea" id="RHEA-COMP:10001"/>
        <dbReference type="Rhea" id="RHEA-COMP:10162"/>
        <dbReference type="Rhea" id="RHEA-COMP:10485"/>
        <dbReference type="ChEBI" id="CHEBI:17319"/>
        <dbReference type="ChEBI" id="CHEBI:33737"/>
        <dbReference type="ChEBI" id="CHEBI:33738"/>
        <dbReference type="ChEBI" id="CHEBI:57844"/>
        <dbReference type="ChEBI" id="CHEBI:57856"/>
        <dbReference type="ChEBI" id="CHEBI:59789"/>
        <dbReference type="ChEBI" id="CHEBI:74411"/>
        <dbReference type="ChEBI" id="CHEBI:74497"/>
        <dbReference type="EC" id="2.1.1.192"/>
    </reaction>
</comment>
<comment type="cofactor">
    <cofactor evidence="1">
        <name>[4Fe-4S] cluster</name>
        <dbReference type="ChEBI" id="CHEBI:49883"/>
    </cofactor>
    <text evidence="1">Binds 1 [4Fe-4S] cluster. The cluster is coordinated with 3 cysteines and an exchangeable S-adenosyl-L-methionine.</text>
</comment>
<comment type="subcellular location">
    <subcellularLocation>
        <location evidence="1">Cytoplasm</location>
    </subcellularLocation>
</comment>
<comment type="miscellaneous">
    <text evidence="1">Reaction proceeds by a ping-pong mechanism involving intermediate methylation of a conserved cysteine residue.</text>
</comment>
<comment type="similarity">
    <text evidence="1">Belongs to the radical SAM superfamily. RlmN family.</text>
</comment>
<gene>
    <name evidence="1" type="primary">rlmN</name>
    <name type="ordered locus">Daro_2988</name>
</gene>
<protein>
    <recommendedName>
        <fullName evidence="1">Dual-specificity RNA methyltransferase RlmN</fullName>
        <ecNumber evidence="1">2.1.1.192</ecNumber>
    </recommendedName>
    <alternativeName>
        <fullName evidence="1">23S rRNA (adenine(2503)-C(2))-methyltransferase</fullName>
    </alternativeName>
    <alternativeName>
        <fullName evidence="1">23S rRNA m2A2503 methyltransferase</fullName>
    </alternativeName>
    <alternativeName>
        <fullName evidence="1">Ribosomal RNA large subunit methyltransferase N</fullName>
    </alternativeName>
    <alternativeName>
        <fullName evidence="1">tRNA (adenine(37)-C(2))-methyltransferase</fullName>
    </alternativeName>
    <alternativeName>
        <fullName evidence="1">tRNA m2A37 methyltransferase</fullName>
    </alternativeName>
</protein>